<sequence length="526" mass="58590">MWSSSQASTRGVIEVGRVEAGPSHFPKRPAPRNSSRVNLSRTYAIKSCSVSSRTGLCLGQCYHKKSSACKCKLGWSSQPLSSLRHHLRVHSSASEAVLTSQSDFTKLLVGNEKIGVLLLNLGGPETLDDVQPFLFNLFADPDIIRLPRLFRFLQKPLAQFISVVRAPKSKEGYASIGGGSPLRQITDAQAEALRKALCDKDIPAKVYVGMRYWHPFTEEAIEQIKRDGITKLVVLPLYPQFSISTSGSSLRLLEGIFREDEYLVNMQHTVIPSWYQREGYIKAMATLIEKELRTFSEPQKVMIFFSAHGVPLAYVEEAGDPYKAEMEECVDLIMEELEKRGITNSCTLAYQSRVGPVEWLRPYTDETIIELGQKGVKSLLAVPISFVSEHIETLEEIDVEYKELALESGIKHWGRVPALGCEPTFITDLADAVIESLPYVGAMAVSNLEARQPLVPLGSVEELLAAYDSKRDELPPPVTVWEWGWTKSAETWNGRAAMLAVLALLVLEVTTGEGFLHQWGILPLFH</sequence>
<feature type="transit peptide" description="Chloroplast" evidence="1">
    <location>
        <begin position="1"/>
        <end status="unknown"/>
    </location>
</feature>
<feature type="chain" id="PRO_0000295023" description="Ferrochelatase-2, chloroplastic">
    <location>
        <begin status="unknown"/>
        <end position="526"/>
    </location>
</feature>
<feature type="sequence conflict" description="In Ref. 2; BAA22284." evidence="2" ref="2">
    <original>K</original>
    <variation>R</variation>
    <location>
        <position position="70"/>
    </location>
</feature>
<keyword id="KW-0150">Chloroplast</keyword>
<keyword id="KW-0350">Heme biosynthesis</keyword>
<keyword id="KW-0408">Iron</keyword>
<keyword id="KW-0456">Lyase</keyword>
<keyword id="KW-0934">Plastid</keyword>
<keyword id="KW-0627">Porphyrin biosynthesis</keyword>
<keyword id="KW-1185">Reference proteome</keyword>
<keyword id="KW-0809">Transit peptide</keyword>
<protein>
    <recommendedName>
        <fullName>Ferrochelatase-2, chloroplastic</fullName>
        <ecNumber>4.98.1.1</ecNumber>
    </recommendedName>
    <alternativeName>
        <fullName>Ferrochelatase II</fullName>
    </alternativeName>
    <alternativeName>
        <fullName>Heme synthase 2</fullName>
    </alternativeName>
    <alternativeName>
        <fullName>Protoheme ferro-lyase 2</fullName>
    </alternativeName>
</protein>
<comment type="function">
    <text>Catalyzes the ferrous insertion into protoporphyrin IX.</text>
</comment>
<comment type="catalytic activity">
    <reaction>
        <text>heme b + 2 H(+) = protoporphyrin IX + Fe(2+)</text>
        <dbReference type="Rhea" id="RHEA:22584"/>
        <dbReference type="ChEBI" id="CHEBI:15378"/>
        <dbReference type="ChEBI" id="CHEBI:29033"/>
        <dbReference type="ChEBI" id="CHEBI:57306"/>
        <dbReference type="ChEBI" id="CHEBI:60344"/>
        <dbReference type="EC" id="4.98.1.1"/>
    </reaction>
</comment>
<comment type="pathway">
    <text>Porphyrin-containing compound metabolism; protoheme biosynthesis; protoheme from protoporphyrin-IX: step 1/1.</text>
</comment>
<comment type="subcellular location">
    <subcellularLocation>
        <location>Plastid</location>
        <location>Chloroplast</location>
    </subcellularLocation>
</comment>
<comment type="similarity">
    <text evidence="2">Belongs to the ferrochelatase family.</text>
</comment>
<reference key="1">
    <citation type="journal article" date="2005" name="PLoS Biol.">
        <title>The genomes of Oryza sativa: a history of duplications.</title>
        <authorList>
            <person name="Yu J."/>
            <person name="Wang J."/>
            <person name="Lin W."/>
            <person name="Li S."/>
            <person name="Li H."/>
            <person name="Zhou J."/>
            <person name="Ni P."/>
            <person name="Dong W."/>
            <person name="Hu S."/>
            <person name="Zeng C."/>
            <person name="Zhang J."/>
            <person name="Zhang Y."/>
            <person name="Li R."/>
            <person name="Xu Z."/>
            <person name="Li S."/>
            <person name="Li X."/>
            <person name="Zheng H."/>
            <person name="Cong L."/>
            <person name="Lin L."/>
            <person name="Yin J."/>
            <person name="Geng J."/>
            <person name="Li G."/>
            <person name="Shi J."/>
            <person name="Liu J."/>
            <person name="Lv H."/>
            <person name="Li J."/>
            <person name="Wang J."/>
            <person name="Deng Y."/>
            <person name="Ran L."/>
            <person name="Shi X."/>
            <person name="Wang X."/>
            <person name="Wu Q."/>
            <person name="Li C."/>
            <person name="Ren X."/>
            <person name="Wang J."/>
            <person name="Wang X."/>
            <person name="Li D."/>
            <person name="Liu D."/>
            <person name="Zhang X."/>
            <person name="Ji Z."/>
            <person name="Zhao W."/>
            <person name="Sun Y."/>
            <person name="Zhang Z."/>
            <person name="Bao J."/>
            <person name="Han Y."/>
            <person name="Dong L."/>
            <person name="Ji J."/>
            <person name="Chen P."/>
            <person name="Wu S."/>
            <person name="Liu J."/>
            <person name="Xiao Y."/>
            <person name="Bu D."/>
            <person name="Tan J."/>
            <person name="Yang L."/>
            <person name="Ye C."/>
            <person name="Zhang J."/>
            <person name="Xu J."/>
            <person name="Zhou Y."/>
            <person name="Yu Y."/>
            <person name="Zhang B."/>
            <person name="Zhuang S."/>
            <person name="Wei H."/>
            <person name="Liu B."/>
            <person name="Lei M."/>
            <person name="Yu H."/>
            <person name="Li Y."/>
            <person name="Xu H."/>
            <person name="Wei S."/>
            <person name="He X."/>
            <person name="Fang L."/>
            <person name="Zhang Z."/>
            <person name="Zhang Y."/>
            <person name="Huang X."/>
            <person name="Su Z."/>
            <person name="Tong W."/>
            <person name="Li J."/>
            <person name="Tong Z."/>
            <person name="Li S."/>
            <person name="Ye J."/>
            <person name="Wang L."/>
            <person name="Fang L."/>
            <person name="Lei T."/>
            <person name="Chen C.-S."/>
            <person name="Chen H.-C."/>
            <person name="Xu Z."/>
            <person name="Li H."/>
            <person name="Huang H."/>
            <person name="Zhang F."/>
            <person name="Xu H."/>
            <person name="Li N."/>
            <person name="Zhao C."/>
            <person name="Li S."/>
            <person name="Dong L."/>
            <person name="Huang Y."/>
            <person name="Li L."/>
            <person name="Xi Y."/>
            <person name="Qi Q."/>
            <person name="Li W."/>
            <person name="Zhang B."/>
            <person name="Hu W."/>
            <person name="Zhang Y."/>
            <person name="Tian X."/>
            <person name="Jiao Y."/>
            <person name="Liang X."/>
            <person name="Jin J."/>
            <person name="Gao L."/>
            <person name="Zheng W."/>
            <person name="Hao B."/>
            <person name="Liu S.-M."/>
            <person name="Wang W."/>
            <person name="Yuan L."/>
            <person name="Cao M."/>
            <person name="McDermott J."/>
            <person name="Samudrala R."/>
            <person name="Wang J."/>
            <person name="Wong G.K.-S."/>
            <person name="Yang H."/>
        </authorList>
    </citation>
    <scope>NUCLEOTIDE SEQUENCE [LARGE SCALE GENOMIC DNA]</scope>
    <source>
        <strain>cv. 93-11</strain>
    </source>
</reference>
<reference key="2">
    <citation type="online journal article" date="1997" name="Plant Gene Register">
        <title>Nucleotide sequence of a cDNA clone encoding ferrochelatase from rice.</title>
        <authorList>
            <person name="Kanjo N."/>
            <person name="Inokuchi H."/>
        </authorList>
        <locator>PGR97-175</locator>
    </citation>
    <scope>NUCLEOTIDE SEQUENCE [MRNA] OF 33-526</scope>
</reference>
<name>HEMH_ORYSI</name>
<gene>
    <name type="primary">HEMH</name>
    <name type="ORF">OsI_018948</name>
</gene>
<dbReference type="EC" id="4.98.1.1"/>
<dbReference type="EMBL" id="CM000130">
    <property type="status" value="NOT_ANNOTATED_CDS"/>
    <property type="molecule type" value="Genomic_DNA"/>
</dbReference>
<dbReference type="EMBL" id="AB007120">
    <property type="protein sequence ID" value="BAA22284.1"/>
    <property type="molecule type" value="mRNA"/>
</dbReference>
<dbReference type="SMR" id="A2Y3Q5"/>
<dbReference type="STRING" id="39946.A2Y3Q5"/>
<dbReference type="EnsemblPlants" id="OsGoSa_05g0013740.01">
    <property type="protein sequence ID" value="OsGoSa_05g0013740.01"/>
    <property type="gene ID" value="OsGoSa_05g0013740"/>
</dbReference>
<dbReference type="EnsemblPlants" id="OsIR64_05g0013510.01">
    <property type="protein sequence ID" value="OsIR64_05g0013510.01"/>
    <property type="gene ID" value="OsIR64_05g0013510"/>
</dbReference>
<dbReference type="EnsemblPlants" id="OsKYG_05g0013710.01">
    <property type="protein sequence ID" value="OsKYG_05g0013710.01"/>
    <property type="gene ID" value="OsKYG_05g0013710"/>
</dbReference>
<dbReference type="EnsemblPlants" id="OsLaMu_05g0013800.01">
    <property type="protein sequence ID" value="OsLaMu_05g0013800.01"/>
    <property type="gene ID" value="OsLaMu_05g0013800"/>
</dbReference>
<dbReference type="EnsemblPlants" id="OsLima_05g0013700.01">
    <property type="protein sequence ID" value="OsLima_05g0013700.01"/>
    <property type="gene ID" value="OsLima_05g0013700"/>
</dbReference>
<dbReference type="EnsemblPlants" id="OsLiXu_05g0013800.02">
    <property type="protein sequence ID" value="OsLiXu_05g0013800.02"/>
    <property type="gene ID" value="OsLiXu_05g0013800"/>
</dbReference>
<dbReference type="EnsemblPlants" id="OsLiXu_Ung0023600.01">
    <property type="protein sequence ID" value="OsLiXu_Ung0023600.01"/>
    <property type="gene ID" value="OsLiXu_Ung0023600"/>
</dbReference>
<dbReference type="EnsemblPlants" id="OsMH63_05G013760_01">
    <property type="protein sequence ID" value="OsMH63_05G013760_01"/>
    <property type="gene ID" value="OsMH63_05G013760"/>
</dbReference>
<dbReference type="EnsemblPlants" id="OsPr106_05g0013950.01">
    <property type="protein sequence ID" value="OsPr106_05g0013950.01"/>
    <property type="gene ID" value="OsPr106_05g0013950"/>
</dbReference>
<dbReference type="EnsemblPlants" id="OsZS97_05G013900_01">
    <property type="protein sequence ID" value="OsZS97_05G013900_01"/>
    <property type="gene ID" value="OsZS97_05G013900"/>
</dbReference>
<dbReference type="Gramene" id="OsGoSa_05g0013740.01">
    <property type="protein sequence ID" value="OsGoSa_05g0013740.01"/>
    <property type="gene ID" value="OsGoSa_05g0013740"/>
</dbReference>
<dbReference type="Gramene" id="OsIR64_05g0013510.01">
    <property type="protein sequence ID" value="OsIR64_05g0013510.01"/>
    <property type="gene ID" value="OsIR64_05g0013510"/>
</dbReference>
<dbReference type="Gramene" id="OsKYG_05g0013710.01">
    <property type="protein sequence ID" value="OsKYG_05g0013710.01"/>
    <property type="gene ID" value="OsKYG_05g0013710"/>
</dbReference>
<dbReference type="Gramene" id="OsLaMu_05g0013800.01">
    <property type="protein sequence ID" value="OsLaMu_05g0013800.01"/>
    <property type="gene ID" value="OsLaMu_05g0013800"/>
</dbReference>
<dbReference type="Gramene" id="OsLima_05g0013700.01">
    <property type="protein sequence ID" value="OsLima_05g0013700.01"/>
    <property type="gene ID" value="OsLima_05g0013700"/>
</dbReference>
<dbReference type="Gramene" id="OsLiXu_05g0013800.02">
    <property type="protein sequence ID" value="OsLiXu_05g0013800.02"/>
    <property type="gene ID" value="OsLiXu_05g0013800"/>
</dbReference>
<dbReference type="Gramene" id="OsLiXu_Ung0023600.01">
    <property type="protein sequence ID" value="OsLiXu_Ung0023600.01"/>
    <property type="gene ID" value="OsLiXu_Ung0023600"/>
</dbReference>
<dbReference type="Gramene" id="OsMH63_05G013760_01">
    <property type="protein sequence ID" value="OsMH63_05G013760_01"/>
    <property type="gene ID" value="OsMH63_05G013760"/>
</dbReference>
<dbReference type="Gramene" id="OsPr106_05g0013950.01">
    <property type="protein sequence ID" value="OsPr106_05g0013950.01"/>
    <property type="gene ID" value="OsPr106_05g0013950"/>
</dbReference>
<dbReference type="Gramene" id="OsZS97_05G013900_01">
    <property type="protein sequence ID" value="OsZS97_05G013900_01"/>
    <property type="gene ID" value="OsZS97_05G013900"/>
</dbReference>
<dbReference type="OrthoDB" id="1323at2759"/>
<dbReference type="UniPathway" id="UPA00252">
    <property type="reaction ID" value="UER00325"/>
</dbReference>
<dbReference type="Proteomes" id="UP000007015">
    <property type="component" value="Chromosome 5"/>
</dbReference>
<dbReference type="GO" id="GO:0009507">
    <property type="term" value="C:chloroplast"/>
    <property type="evidence" value="ECO:0007669"/>
    <property type="project" value="UniProtKB-SubCell"/>
</dbReference>
<dbReference type="GO" id="GO:0005739">
    <property type="term" value="C:mitochondrion"/>
    <property type="evidence" value="ECO:0007669"/>
    <property type="project" value="TreeGrafter"/>
</dbReference>
<dbReference type="GO" id="GO:0004325">
    <property type="term" value="F:ferrochelatase activity"/>
    <property type="evidence" value="ECO:0007669"/>
    <property type="project" value="InterPro"/>
</dbReference>
<dbReference type="GO" id="GO:0006783">
    <property type="term" value="P:heme biosynthetic process"/>
    <property type="evidence" value="ECO:0007669"/>
    <property type="project" value="UniProtKB-KW"/>
</dbReference>
<dbReference type="CDD" id="cd00419">
    <property type="entry name" value="Ferrochelatase_C"/>
    <property type="match status" value="1"/>
</dbReference>
<dbReference type="CDD" id="cd03411">
    <property type="entry name" value="Ferrochelatase_N"/>
    <property type="match status" value="1"/>
</dbReference>
<dbReference type="FunFam" id="3.40.50.1400:FF:000006">
    <property type="entry name" value="Ferrochelatase"/>
    <property type="match status" value="1"/>
</dbReference>
<dbReference type="Gene3D" id="3.40.50.1400">
    <property type="match status" value="2"/>
</dbReference>
<dbReference type="Gene3D" id="1.10.3460.10">
    <property type="entry name" value="Chlorophyll a/b binding protein domain"/>
    <property type="match status" value="1"/>
</dbReference>
<dbReference type="HAMAP" id="MF_00323">
    <property type="entry name" value="Ferrochelatase"/>
    <property type="match status" value="1"/>
</dbReference>
<dbReference type="InterPro" id="IPR001015">
    <property type="entry name" value="Ferrochelatase"/>
</dbReference>
<dbReference type="InterPro" id="IPR019772">
    <property type="entry name" value="Ferrochelatase_AS"/>
</dbReference>
<dbReference type="InterPro" id="IPR033644">
    <property type="entry name" value="Ferrochelatase_C"/>
</dbReference>
<dbReference type="InterPro" id="IPR033659">
    <property type="entry name" value="Ferrochelatase_N"/>
</dbReference>
<dbReference type="NCBIfam" id="TIGR00109">
    <property type="entry name" value="hemH"/>
    <property type="match status" value="1"/>
</dbReference>
<dbReference type="PANTHER" id="PTHR11108">
    <property type="entry name" value="FERROCHELATASE"/>
    <property type="match status" value="1"/>
</dbReference>
<dbReference type="PANTHER" id="PTHR11108:SF9">
    <property type="entry name" value="FERROCHELATASE-2, CHLOROPLASTIC"/>
    <property type="match status" value="1"/>
</dbReference>
<dbReference type="Pfam" id="PF00762">
    <property type="entry name" value="Ferrochelatase"/>
    <property type="match status" value="1"/>
</dbReference>
<dbReference type="SUPFAM" id="SSF53800">
    <property type="entry name" value="Chelatase"/>
    <property type="match status" value="1"/>
</dbReference>
<dbReference type="SUPFAM" id="SSF103511">
    <property type="entry name" value="Chlorophyll a-b binding protein"/>
    <property type="match status" value="1"/>
</dbReference>
<dbReference type="PROSITE" id="PS00534">
    <property type="entry name" value="FERROCHELATASE"/>
    <property type="match status" value="1"/>
</dbReference>
<evidence type="ECO:0000255" key="1"/>
<evidence type="ECO:0000305" key="2"/>
<organism>
    <name type="scientific">Oryza sativa subsp. indica</name>
    <name type="common">Rice</name>
    <dbReference type="NCBI Taxonomy" id="39946"/>
    <lineage>
        <taxon>Eukaryota</taxon>
        <taxon>Viridiplantae</taxon>
        <taxon>Streptophyta</taxon>
        <taxon>Embryophyta</taxon>
        <taxon>Tracheophyta</taxon>
        <taxon>Spermatophyta</taxon>
        <taxon>Magnoliopsida</taxon>
        <taxon>Liliopsida</taxon>
        <taxon>Poales</taxon>
        <taxon>Poaceae</taxon>
        <taxon>BOP clade</taxon>
        <taxon>Oryzoideae</taxon>
        <taxon>Oryzeae</taxon>
        <taxon>Oryzinae</taxon>
        <taxon>Oryza</taxon>
        <taxon>Oryza sativa</taxon>
    </lineage>
</organism>
<proteinExistence type="evidence at transcript level"/>
<accession>A2Y3Q5</accession>
<accession>O22101</accession>
<accession>Q6L4M5</accession>